<organism>
    <name type="scientific">Caenorhabditis briggsae</name>
    <dbReference type="NCBI Taxonomy" id="6238"/>
    <lineage>
        <taxon>Eukaryota</taxon>
        <taxon>Metazoa</taxon>
        <taxon>Ecdysozoa</taxon>
        <taxon>Nematoda</taxon>
        <taxon>Chromadorea</taxon>
        <taxon>Rhabditida</taxon>
        <taxon>Rhabditina</taxon>
        <taxon>Rhabditomorpha</taxon>
        <taxon>Rhabditoidea</taxon>
        <taxon>Rhabditidae</taxon>
        <taxon>Peloderinae</taxon>
        <taxon>Caenorhabditis</taxon>
    </lineage>
</organism>
<proteinExistence type="evidence at transcript level"/>
<keyword id="KW-0963">Cytoplasm</keyword>
<keyword id="KW-0217">Developmental protein</keyword>
<keyword id="KW-0221">Differentiation</keyword>
<keyword id="KW-0539">Nucleus</keyword>
<keyword id="KW-1185">Reference proteome</keyword>
<dbReference type="EMBL" id="AF263434">
    <property type="protein sequence ID" value="AAG17638.1"/>
    <property type="molecule type" value="mRNA"/>
</dbReference>
<dbReference type="EMBL" id="HE601197">
    <property type="protein sequence ID" value="CAP28468.3"/>
    <property type="molecule type" value="Genomic_DNA"/>
</dbReference>
<dbReference type="FunCoup" id="Q9GNN7">
    <property type="interactions" value="769"/>
</dbReference>
<dbReference type="STRING" id="6238.Q9GNN7"/>
<dbReference type="EnsemblMetazoa" id="CBG08546.1">
    <property type="protein sequence ID" value="CBG08546.1"/>
    <property type="gene ID" value="WBGene00030313"/>
</dbReference>
<dbReference type="KEGG" id="cbr:CBG_08546"/>
<dbReference type="CTD" id="8578256"/>
<dbReference type="WormBase" id="CBG08546">
    <property type="protein sequence ID" value="CBP02128"/>
    <property type="gene ID" value="WBGene00030313"/>
    <property type="gene designation" value="Cbr-lin-25"/>
</dbReference>
<dbReference type="eggNOG" id="ENOG502S9A0">
    <property type="taxonomic scope" value="Eukaryota"/>
</dbReference>
<dbReference type="HOGENOM" id="CLU_301410_0_0_1"/>
<dbReference type="InParanoid" id="Q9GNN7"/>
<dbReference type="OMA" id="HCPLPRI"/>
<dbReference type="Proteomes" id="UP000008549">
    <property type="component" value="Unassembled WGS sequence"/>
</dbReference>
<dbReference type="GO" id="GO:0005737">
    <property type="term" value="C:cytoplasm"/>
    <property type="evidence" value="ECO:0000250"/>
    <property type="project" value="UniProtKB"/>
</dbReference>
<dbReference type="GO" id="GO:0005634">
    <property type="term" value="C:nucleus"/>
    <property type="evidence" value="ECO:0000250"/>
    <property type="project" value="UniProtKB"/>
</dbReference>
<dbReference type="GO" id="GO:0001708">
    <property type="term" value="P:cell fate specification"/>
    <property type="evidence" value="ECO:0000250"/>
    <property type="project" value="UniProtKB"/>
</dbReference>
<dbReference type="GO" id="GO:0050830">
    <property type="term" value="P:defense response to Gram-positive bacterium"/>
    <property type="evidence" value="ECO:0007669"/>
    <property type="project" value="EnsemblMetazoa"/>
</dbReference>
<dbReference type="GO" id="GO:0040025">
    <property type="term" value="P:vulval development"/>
    <property type="evidence" value="ECO:0007669"/>
    <property type="project" value="EnsemblMetazoa"/>
</dbReference>
<feature type="chain" id="PRO_0000338449" description="Protein lin-25">
    <location>
        <begin position="1"/>
        <end position="1142"/>
    </location>
</feature>
<feature type="region of interest" description="Disordered" evidence="2">
    <location>
        <begin position="600"/>
        <end position="706"/>
    </location>
</feature>
<feature type="compositionally biased region" description="Acidic residues" evidence="2">
    <location>
        <begin position="600"/>
        <end position="613"/>
    </location>
</feature>
<feature type="compositionally biased region" description="Basic and acidic residues" evidence="2">
    <location>
        <begin position="614"/>
        <end position="627"/>
    </location>
</feature>
<feature type="compositionally biased region" description="Basic and acidic residues" evidence="2">
    <location>
        <begin position="652"/>
        <end position="662"/>
    </location>
</feature>
<feature type="compositionally biased region" description="Basic and acidic residues" evidence="2">
    <location>
        <begin position="679"/>
        <end position="703"/>
    </location>
</feature>
<reference evidence="3" key="1">
    <citation type="journal article" date="2000" name="Genetics">
        <title>Caenorhabditis elegans lin-25: a study of its role in multiple cell fate specification events involving ras and the identification and characterization of evolutionarily conserved domains.</title>
        <authorList>
            <person name="Nilsson L."/>
            <person name="Tiensuu T."/>
            <person name="Tuck S."/>
        </authorList>
    </citation>
    <scope>NUCLEOTIDE SEQUENCE [MRNA]</scope>
</reference>
<reference key="2">
    <citation type="journal article" date="2003" name="PLoS Biol.">
        <title>The genome sequence of Caenorhabditis briggsae: a platform for comparative genomics.</title>
        <authorList>
            <person name="Stein L.D."/>
            <person name="Bao Z."/>
            <person name="Blasiar D."/>
            <person name="Blumenthal T."/>
            <person name="Brent M.R."/>
            <person name="Chen N."/>
            <person name="Chinwalla A."/>
            <person name="Clarke L."/>
            <person name="Clee C."/>
            <person name="Coghlan A."/>
            <person name="Coulson A."/>
            <person name="D'Eustachio P."/>
            <person name="Fitch D.H.A."/>
            <person name="Fulton L.A."/>
            <person name="Fulton R.E."/>
            <person name="Griffiths-Jones S."/>
            <person name="Harris T.W."/>
            <person name="Hillier L.W."/>
            <person name="Kamath R."/>
            <person name="Kuwabara P.E."/>
            <person name="Mardis E.R."/>
            <person name="Marra M.A."/>
            <person name="Miner T.L."/>
            <person name="Minx P."/>
            <person name="Mullikin J.C."/>
            <person name="Plumb R.W."/>
            <person name="Rogers J."/>
            <person name="Schein J.E."/>
            <person name="Sohrmann M."/>
            <person name="Spieth J."/>
            <person name="Stajich J.E."/>
            <person name="Wei C."/>
            <person name="Willey D."/>
            <person name="Wilson R.K."/>
            <person name="Durbin R.M."/>
            <person name="Waterston R.H."/>
        </authorList>
    </citation>
    <scope>NUCLEOTIDE SEQUENCE [LARGE SCALE GENOMIC DNA]</scope>
    <source>
        <strain>AF16</strain>
    </source>
</reference>
<accession>Q9GNN7</accession>
<sequence length="1142" mass="131215">MHIAVDNLTISVPKIDKPTKAALDYVELLRESFSAKKRQKFSKASLAIRPSDFPDLSNQQLCDILVRVAYNGSHIDEDFRKHVLDLVEDQSLTWNQVLLSVIRTQSDQLYMKSQLCELITEMIRFVQIKSFHDPKHADSLISVILPTFVFLTKLILELLSDEDEMETIQIEYETKFPPYHKPLQALNTLIHDNLCGPLLAMYRSSEEVTRQLVLCSEAFSKLERPDESSVGLLDLILEKHQDNCKPTKYEYTPDGLAAYDLKNPSVRILVPIFACFRCHETSKQMAETVQIFVDIMRVSGDDVVFDLLHAAILLKCEESNNLLHLSKQHRLDFRWQSTTFFYKKLPQIIEHLVSFGKVTAEDVQKGMERALNDLTMLFDVADISWQNASFLTVLNALEPLIGSEAANPLRHRRREYMRKTASLTALADSDEKLIENTDIDRLLNAVKQVMNLQFGQNEEFYQEFIRKVNGDDCEDFDAVMSILISEGRLLEVGKAFAMKSKLAQYPSELSLDERIKKFDETFLLLTRIIVKFPGLSIGLLVNGGPGEISIADSIFYRWSMWYVKRVPRKDKSEEKSEEELEAMRIQAKVLIEEINKEVGIEEEIEEEEEDIEPEVVKEMKESGTEKEKEEEEEDGNKETKNETANDEEMPGDEQKTEEKMDTSETPAEPPIQQQSTPEDPPKVEEPAERINQEKPEEKPKEPLEPTWNEMNCALPRISRKKARRYLGLLKQGNPFWSTDNNSLNIGAILAALPSMGKLLIEEHNEEKHRVDRKSAEEHMANIIHALESMPCLFVCLVQWVDCAPASPARTLLAKTMKNALEKRVSSSSASIADDTNLPKWRFILSTCNEMIHELTDRVPVFPDITCTAFSAARRLCPFVTRDEIPDSTKLKHAWYYMCQQSWTSPHALRLLEHANIHSEYNTWIHLYITKIVGGGCGEIMKDQVDMIFGMLMMDDLNVIIRMHEIMMDFWLSEEAGNLQLDGRFDPLSMTAVIRLMANVMLISEWTLDRLINDGPPLVEFDFTSAMTPEPEDPLRREKWVFLLRQMLDRTVNRLFKILRQGVLCTVVNTIVRLIKAIAGSADCKAKRLLIKRIPPEIVFQLAYIEPQCADYALMNAYCDPKNEEHTRTKIRFLCALRRSHIL</sequence>
<comment type="function">
    <text evidence="1">Participates in the inductive signaling pathway downstream of let-60 Ras and the RAF/MAP kinase cascade to regulate specification and differentiation of many cell types. Positively regulates the fate of vulval precursor cells. Required for induction of the P12 and excretory duct cell fates. In males, it is also required for proper formation of spicules. Does not function in the signaling pathway that promotes exit from pachytene (By similarity).</text>
</comment>
<comment type="subcellular location">
    <subcellularLocation>
        <location evidence="1">Nucleus</location>
    </subcellularLocation>
    <subcellularLocation>
        <location evidence="1">Cytoplasm</location>
    </subcellularLocation>
</comment>
<gene>
    <name evidence="3" type="primary">lin-25</name>
    <name type="ORF">CBG08546</name>
</gene>
<evidence type="ECO:0000250" key="1">
    <source>
        <dbReference type="UniProtKB" id="Q10573"/>
    </source>
</evidence>
<evidence type="ECO:0000256" key="2">
    <source>
        <dbReference type="SAM" id="MobiDB-lite"/>
    </source>
</evidence>
<evidence type="ECO:0000312" key="3">
    <source>
        <dbReference type="EMBL" id="AAG17638.1"/>
    </source>
</evidence>
<name>LIN25_CAEBR</name>
<protein>
    <recommendedName>
        <fullName>Protein lin-25</fullName>
    </recommendedName>
    <alternativeName>
        <fullName>Abnormal cell lineage protein 25</fullName>
    </alternativeName>
</protein>